<protein>
    <recommendedName>
        <fullName>Probable replication endonuclease from prophage-like region</fullName>
        <ecNumber>3.1.-.-</ecNumber>
    </recommendedName>
</protein>
<dbReference type="EC" id="3.1.-.-"/>
<dbReference type="EMBL" id="CP000026">
    <property type="protein sequence ID" value="AAV78457.1"/>
    <property type="molecule type" value="Genomic_DNA"/>
</dbReference>
<dbReference type="RefSeq" id="WP_000301196.1">
    <property type="nucleotide sequence ID" value="NC_006511.1"/>
</dbReference>
<dbReference type="KEGG" id="spt:SPA2590"/>
<dbReference type="HOGENOM" id="CLU_013772_2_0_6"/>
<dbReference type="Proteomes" id="UP000008185">
    <property type="component" value="Chromosome"/>
</dbReference>
<dbReference type="GO" id="GO:0004519">
    <property type="term" value="F:endonuclease activity"/>
    <property type="evidence" value="ECO:0007669"/>
    <property type="project" value="UniProtKB-KW"/>
</dbReference>
<dbReference type="GO" id="GO:0006260">
    <property type="term" value="P:DNA replication"/>
    <property type="evidence" value="ECO:0007669"/>
    <property type="project" value="UniProtKB-KW"/>
</dbReference>
<dbReference type="InterPro" id="IPR008766">
    <property type="entry name" value="Replication_gene_A-like"/>
</dbReference>
<dbReference type="Pfam" id="PF05840">
    <property type="entry name" value="Phage_GPA"/>
    <property type="match status" value="1"/>
</dbReference>
<organism>
    <name type="scientific">Salmonella paratyphi A (strain ATCC 9150 / SARB42)</name>
    <dbReference type="NCBI Taxonomy" id="295319"/>
    <lineage>
        <taxon>Bacteria</taxon>
        <taxon>Pseudomonadati</taxon>
        <taxon>Pseudomonadota</taxon>
        <taxon>Gammaproteobacteria</taxon>
        <taxon>Enterobacterales</taxon>
        <taxon>Enterobacteriaceae</taxon>
        <taxon>Salmonella</taxon>
    </lineage>
</organism>
<evidence type="ECO:0000250" key="1"/>
<evidence type="ECO:0000305" key="2"/>
<sequence length="800" mass="91502">MAVSKITLHYAQTTGGSNEAAAAFPWNTPKKAVNPYLDPAEFAPESALSNLIALYAVDNEQEQLRRETLSDEVWERYFFNESRDPVQREMEQDRLISHAKTAREQQRFNPDLVIIANVGAQPAHISKPLLERIKYFHSLGRAKAYSRYLQKTIRPCLERLERVRDSQVSASFRFMASHDGLEGLLVLPEMNQDQVKRLSTLVAAHMSMCLDAACGDLFVSDDVKPEEIRQAWERVAAEAMRLEVIPPAFEQLRRKKRRRKPVPYELIPPSLARMLCADWWYRKLWQMRCEWREEQLRAVCLVNKKASPYVSYEAVIHKREQRRKSLEFFRSHELINEDGDTLDMEDVVNASNSNPAHRRNEMMACVKGLELIAEMRGDCAVFYTITCPSRFHATLNNGRPNPKWTSATVRQSSDYLVDTFAAFRKAMHKAGLRWYGVRVAEPHHDGTVHWHLLCFMRKKDRRSITALLRKFAIREDREELGANTGPRFKPELINPRKGTPTSYIAKYISKNIDGRGLAKEISKETGRSLRDSAEHVSAWASLHRVQQFRFFGIPGRQAYRELRLLAGQAARVQGERKAGAPVLDNPRLDAVLAAADAGCFATYIMKQGGVLVPRKHHLVRTAYELNDEPSAYGDHGIRIYGIWSPIAEGKICTHAVKWKKVRKAVDVQEAAADQGACAPWTRGNNCPPVENLNKSGGDLPDIKTMNEKELQDYLHNMGQKERRELTARLRLVKPKRKTVYKQNISEQQRLQLEAELTARGFEGSASEIDLLLRGGSIPSGAGLRIFYRNHRLQEDDKWRQ</sequence>
<gene>
    <name type="ordered locus">SPA2590</name>
</gene>
<keyword id="KW-0235">DNA replication</keyword>
<keyword id="KW-0255">Endonuclease</keyword>
<keyword id="KW-0378">Hydrolase</keyword>
<keyword id="KW-0540">Nuclease</keyword>
<feature type="chain" id="PRO_0000278165" description="Probable replication endonuclease from prophage-like region">
    <location>
        <begin position="1"/>
        <end position="800"/>
    </location>
</feature>
<feature type="active site" description="O-(5'-phospho-DNA)-tyrosine intermediate" evidence="1">
    <location>
        <position position="503"/>
    </location>
</feature>
<feature type="active site" description="O-(5'-phospho-DNA)-tyrosine intermediate" evidence="1">
    <location>
        <position position="507"/>
    </location>
</feature>
<name>ENDPH_SALPA</name>
<reference key="1">
    <citation type="journal article" date="2004" name="Nat. Genet.">
        <title>Comparison of genome degradation in Paratyphi A and Typhi, human-restricted serovars of Salmonella enterica that cause typhoid.</title>
        <authorList>
            <person name="McClelland M."/>
            <person name="Sanderson K.E."/>
            <person name="Clifton S.W."/>
            <person name="Latreille P."/>
            <person name="Porwollik S."/>
            <person name="Sabo A."/>
            <person name="Meyer R."/>
            <person name="Bieri T."/>
            <person name="Ozersky P."/>
            <person name="McLellan M."/>
            <person name="Harkins C.R."/>
            <person name="Wang C."/>
            <person name="Nguyen C."/>
            <person name="Berghoff A."/>
            <person name="Elliott G."/>
            <person name="Kohlberg S."/>
            <person name="Strong C."/>
            <person name="Du F."/>
            <person name="Carter J."/>
            <person name="Kremizki C."/>
            <person name="Layman D."/>
            <person name="Leonard S."/>
            <person name="Sun H."/>
            <person name="Fulton L."/>
            <person name="Nash W."/>
            <person name="Miner T."/>
            <person name="Minx P."/>
            <person name="Delehaunty K."/>
            <person name="Fronick C."/>
            <person name="Magrini V."/>
            <person name="Nhan M."/>
            <person name="Warren W."/>
            <person name="Florea L."/>
            <person name="Spieth J."/>
            <person name="Wilson R.K."/>
        </authorList>
    </citation>
    <scope>NUCLEOTIDE SEQUENCE [LARGE SCALE GENOMIC DNA]</scope>
    <source>
        <strain>ATCC 9150 / SARB42</strain>
    </source>
</reference>
<proteinExistence type="inferred from homology"/>
<accession>Q5PES4</accession>
<comment type="function">
    <text evidence="2">Possible endonuclease which induces a single-strand cut and initiates DNA replication.</text>
</comment>
<comment type="similarity">
    <text evidence="2">Belongs to the phage GPA family.</text>
</comment>